<protein>
    <recommendedName>
        <fullName evidence="1">Ribosomal RNA small subunit methyltransferase H</fullName>
        <ecNumber evidence="1">2.1.1.199</ecNumber>
    </recommendedName>
    <alternativeName>
        <fullName evidence="1">16S rRNA m(4)C1402 methyltransferase</fullName>
    </alternativeName>
    <alternativeName>
        <fullName evidence="1">rRNA (cytosine-N(4)-)-methyltransferase RsmH</fullName>
    </alternativeName>
</protein>
<accession>Q31I68</accession>
<reference key="1">
    <citation type="journal article" date="2006" name="PLoS Biol.">
        <title>The genome of deep-sea vent chemolithoautotroph Thiomicrospira crunogena XCL-2.</title>
        <authorList>
            <person name="Scott K.M."/>
            <person name="Sievert S.M."/>
            <person name="Abril F.N."/>
            <person name="Ball L.A."/>
            <person name="Barrett C.J."/>
            <person name="Blake R.A."/>
            <person name="Boller A.J."/>
            <person name="Chain P.S.G."/>
            <person name="Clark J.A."/>
            <person name="Davis C.R."/>
            <person name="Detter C."/>
            <person name="Do K.F."/>
            <person name="Dobrinski K.P."/>
            <person name="Faza B.I."/>
            <person name="Fitzpatrick K.A."/>
            <person name="Freyermuth S.K."/>
            <person name="Harmer T.L."/>
            <person name="Hauser L.J."/>
            <person name="Huegler M."/>
            <person name="Kerfeld C.A."/>
            <person name="Klotz M.G."/>
            <person name="Kong W.W."/>
            <person name="Land M."/>
            <person name="Lapidus A."/>
            <person name="Larimer F.W."/>
            <person name="Longo D.L."/>
            <person name="Lucas S."/>
            <person name="Malfatti S.A."/>
            <person name="Massey S.E."/>
            <person name="Martin D.D."/>
            <person name="McCuddin Z."/>
            <person name="Meyer F."/>
            <person name="Moore J.L."/>
            <person name="Ocampo L.H. Jr."/>
            <person name="Paul J.H."/>
            <person name="Paulsen I.T."/>
            <person name="Reep D.K."/>
            <person name="Ren Q."/>
            <person name="Ross R.L."/>
            <person name="Sato P.Y."/>
            <person name="Thomas P."/>
            <person name="Tinkham L.E."/>
            <person name="Zeruth G.T."/>
        </authorList>
    </citation>
    <scope>NUCLEOTIDE SEQUENCE [LARGE SCALE GENOMIC DNA]</scope>
    <source>
        <strain>DSM 25203 / XCL-2</strain>
    </source>
</reference>
<keyword id="KW-0963">Cytoplasm</keyword>
<keyword id="KW-0489">Methyltransferase</keyword>
<keyword id="KW-0698">rRNA processing</keyword>
<keyword id="KW-0949">S-adenosyl-L-methionine</keyword>
<keyword id="KW-0808">Transferase</keyword>
<proteinExistence type="inferred from homology"/>
<dbReference type="EC" id="2.1.1.199" evidence="1"/>
<dbReference type="EMBL" id="CP000109">
    <property type="protein sequence ID" value="ABB41155.1"/>
    <property type="molecule type" value="Genomic_DNA"/>
</dbReference>
<dbReference type="SMR" id="Q31I68"/>
<dbReference type="STRING" id="317025.Tcr_0559"/>
<dbReference type="KEGG" id="tcx:Tcr_0559"/>
<dbReference type="eggNOG" id="COG0275">
    <property type="taxonomic scope" value="Bacteria"/>
</dbReference>
<dbReference type="HOGENOM" id="CLU_038422_2_0_6"/>
<dbReference type="OrthoDB" id="9806637at2"/>
<dbReference type="GO" id="GO:0005737">
    <property type="term" value="C:cytoplasm"/>
    <property type="evidence" value="ECO:0007669"/>
    <property type="project" value="UniProtKB-SubCell"/>
</dbReference>
<dbReference type="GO" id="GO:0071424">
    <property type="term" value="F:rRNA (cytosine-N4-)-methyltransferase activity"/>
    <property type="evidence" value="ECO:0007669"/>
    <property type="project" value="UniProtKB-UniRule"/>
</dbReference>
<dbReference type="GO" id="GO:0070475">
    <property type="term" value="P:rRNA base methylation"/>
    <property type="evidence" value="ECO:0007669"/>
    <property type="project" value="UniProtKB-UniRule"/>
</dbReference>
<dbReference type="FunFam" id="1.10.150.170:FF:000001">
    <property type="entry name" value="Ribosomal RNA small subunit methyltransferase H"/>
    <property type="match status" value="1"/>
</dbReference>
<dbReference type="Gene3D" id="1.10.150.170">
    <property type="entry name" value="Putative methyltransferase TM0872, insert domain"/>
    <property type="match status" value="1"/>
</dbReference>
<dbReference type="Gene3D" id="3.40.50.150">
    <property type="entry name" value="Vaccinia Virus protein VP39"/>
    <property type="match status" value="1"/>
</dbReference>
<dbReference type="HAMAP" id="MF_01007">
    <property type="entry name" value="16SrRNA_methyltr_H"/>
    <property type="match status" value="1"/>
</dbReference>
<dbReference type="InterPro" id="IPR002903">
    <property type="entry name" value="RsmH"/>
</dbReference>
<dbReference type="InterPro" id="IPR023397">
    <property type="entry name" value="SAM-dep_MeTrfase_MraW_recog"/>
</dbReference>
<dbReference type="InterPro" id="IPR029063">
    <property type="entry name" value="SAM-dependent_MTases_sf"/>
</dbReference>
<dbReference type="NCBIfam" id="TIGR00006">
    <property type="entry name" value="16S rRNA (cytosine(1402)-N(4))-methyltransferase RsmH"/>
    <property type="match status" value="1"/>
</dbReference>
<dbReference type="PANTHER" id="PTHR11265:SF0">
    <property type="entry name" value="12S RRNA N4-METHYLCYTIDINE METHYLTRANSFERASE"/>
    <property type="match status" value="1"/>
</dbReference>
<dbReference type="PANTHER" id="PTHR11265">
    <property type="entry name" value="S-ADENOSYL-METHYLTRANSFERASE MRAW"/>
    <property type="match status" value="1"/>
</dbReference>
<dbReference type="Pfam" id="PF01795">
    <property type="entry name" value="Methyltransf_5"/>
    <property type="match status" value="1"/>
</dbReference>
<dbReference type="PIRSF" id="PIRSF004486">
    <property type="entry name" value="MraW"/>
    <property type="match status" value="1"/>
</dbReference>
<dbReference type="SUPFAM" id="SSF81799">
    <property type="entry name" value="Putative methyltransferase TM0872, insert domain"/>
    <property type="match status" value="1"/>
</dbReference>
<dbReference type="SUPFAM" id="SSF53335">
    <property type="entry name" value="S-adenosyl-L-methionine-dependent methyltransferases"/>
    <property type="match status" value="1"/>
</dbReference>
<sequence>MSEIEQTGQSNHYPVMLSESVAGLNIDPNGIYIDCTFGRGGHSRAILNELGEQGRLLAIDQDPEAIRYADANFDDPRFEIQHGSFEALQQYCEARDWVGKIDGILIDLGVSSPQLDEAERGFSFMRSGPLDMRMNPQTGLSAKEWLTQVDEKTLAQVLKQYGEERFSGRIARHIKEAVQEQKLQTTLDLAQVVTKASPKTEKHKHPATRTFQAIRIAVNRELDVLKTVLEVSVAVLKTGGRLSVISFHSLEDRIVKQFIRDQSRIKDLFPDSPIQLEVVEPVIKKVGKPVFPSKEECQENPRSRSAVLRIAERI</sequence>
<gene>
    <name evidence="1" type="primary">rsmH</name>
    <name type="synonym">mraW</name>
    <name type="ordered locus">Tcr_0559</name>
</gene>
<name>RSMH_HYDCU</name>
<feature type="chain" id="PRO_0000387198" description="Ribosomal RNA small subunit methyltransferase H">
    <location>
        <begin position="1"/>
        <end position="314"/>
    </location>
</feature>
<feature type="binding site" evidence="1">
    <location>
        <begin position="40"/>
        <end position="42"/>
    </location>
    <ligand>
        <name>S-adenosyl-L-methionine</name>
        <dbReference type="ChEBI" id="CHEBI:59789"/>
    </ligand>
</feature>
<feature type="binding site" evidence="1">
    <location>
        <position position="60"/>
    </location>
    <ligand>
        <name>S-adenosyl-L-methionine</name>
        <dbReference type="ChEBI" id="CHEBI:59789"/>
    </ligand>
</feature>
<feature type="binding site" evidence="1">
    <location>
        <position position="85"/>
    </location>
    <ligand>
        <name>S-adenosyl-L-methionine</name>
        <dbReference type="ChEBI" id="CHEBI:59789"/>
    </ligand>
</feature>
<feature type="binding site" evidence="1">
    <location>
        <position position="107"/>
    </location>
    <ligand>
        <name>S-adenosyl-L-methionine</name>
        <dbReference type="ChEBI" id="CHEBI:59789"/>
    </ligand>
</feature>
<feature type="binding site" evidence="1">
    <location>
        <position position="114"/>
    </location>
    <ligand>
        <name>S-adenosyl-L-methionine</name>
        <dbReference type="ChEBI" id="CHEBI:59789"/>
    </ligand>
</feature>
<comment type="function">
    <text evidence="1">Specifically methylates the N4 position of cytidine in position 1402 (C1402) of 16S rRNA.</text>
</comment>
<comment type="catalytic activity">
    <reaction evidence="1">
        <text>cytidine(1402) in 16S rRNA + S-adenosyl-L-methionine = N(4)-methylcytidine(1402) in 16S rRNA + S-adenosyl-L-homocysteine + H(+)</text>
        <dbReference type="Rhea" id="RHEA:42928"/>
        <dbReference type="Rhea" id="RHEA-COMP:10286"/>
        <dbReference type="Rhea" id="RHEA-COMP:10287"/>
        <dbReference type="ChEBI" id="CHEBI:15378"/>
        <dbReference type="ChEBI" id="CHEBI:57856"/>
        <dbReference type="ChEBI" id="CHEBI:59789"/>
        <dbReference type="ChEBI" id="CHEBI:74506"/>
        <dbReference type="ChEBI" id="CHEBI:82748"/>
        <dbReference type="EC" id="2.1.1.199"/>
    </reaction>
</comment>
<comment type="subcellular location">
    <subcellularLocation>
        <location evidence="1">Cytoplasm</location>
    </subcellularLocation>
</comment>
<comment type="similarity">
    <text evidence="1">Belongs to the methyltransferase superfamily. RsmH family.</text>
</comment>
<evidence type="ECO:0000255" key="1">
    <source>
        <dbReference type="HAMAP-Rule" id="MF_01007"/>
    </source>
</evidence>
<organism>
    <name type="scientific">Hydrogenovibrio crunogenus (strain DSM 25203 / XCL-2)</name>
    <name type="common">Thiomicrospira crunogena</name>
    <dbReference type="NCBI Taxonomy" id="317025"/>
    <lineage>
        <taxon>Bacteria</taxon>
        <taxon>Pseudomonadati</taxon>
        <taxon>Pseudomonadota</taxon>
        <taxon>Gammaproteobacteria</taxon>
        <taxon>Thiotrichales</taxon>
        <taxon>Piscirickettsiaceae</taxon>
        <taxon>Hydrogenovibrio</taxon>
    </lineage>
</organism>